<evidence type="ECO:0000250" key="1"/>
<evidence type="ECO:0000303" key="2">
    <source ref="3"/>
</evidence>
<evidence type="ECO:0000303" key="3">
    <source ref="4"/>
</evidence>
<evidence type="ECO:0000305" key="4"/>
<sequence>MARSDVLIFVSTLLLFLSLLTVADAELVKSDKFPVVVSTWPFLEAVRAAWRAVDNGSSAVEAVVEGCSACEELRCDGTVGPGGSPDENGETMIDALVMDGVTMEVGAVAAMRYVKDGIRAAHLVMKYSQHTLLAGEGASAFAISMGLPGPMNLSSPESVKKWSDWKENQCQPNFRKNVVPANDCGPYKPNNSAMNVFVDKSTESCEMGAIEYKPPLVGPHNHDTISMAVIDRMGHIAVGTSTNGATYKIPGRVGDGPIVGSSAYADDEVGGCGATGDGDTMMRFLPCYQVVESMRQGMKPEEAAKDAISRIARKFPDFVGAVVAVDKNGSHAGACYGWTFQYSVQNPDMNDVQVFTVLP</sequence>
<reference key="1">
    <citation type="journal article" date="1998" name="DNA Res.">
        <title>Structural analysis of Arabidopsis thaliana chromosome 5. VI. Sequence features of the regions of 1,367,185 bp covered by 19 physically assigned P1 and TAC clones.</title>
        <authorList>
            <person name="Kotani H."/>
            <person name="Nakamura Y."/>
            <person name="Sato S."/>
            <person name="Asamizu E."/>
            <person name="Kaneko T."/>
            <person name="Miyajima N."/>
            <person name="Tabata S."/>
        </authorList>
    </citation>
    <scope>NUCLEOTIDE SEQUENCE [LARGE SCALE GENOMIC DNA]</scope>
    <source>
        <strain>cv. Columbia</strain>
    </source>
</reference>
<reference key="2">
    <citation type="journal article" date="2017" name="Plant J.">
        <title>Araport11: a complete reannotation of the Arabidopsis thaliana reference genome.</title>
        <authorList>
            <person name="Cheng C.Y."/>
            <person name="Krishnakumar V."/>
            <person name="Chan A.P."/>
            <person name="Thibaud-Nissen F."/>
            <person name="Schobel S."/>
            <person name="Town C.D."/>
        </authorList>
    </citation>
    <scope>GENOME REANNOTATION</scope>
    <source>
        <strain>cv. Columbia</strain>
    </source>
</reference>
<reference key="3">
    <citation type="submission" date="2005-05" db="EMBL/GenBank/DDBJ databases">
        <title>Arabidopsis ORF clones.</title>
        <authorList>
            <person name="Kim C.J."/>
            <person name="Chen H."/>
            <person name="Cheuk R.F."/>
            <person name="Shinn P."/>
            <person name="Ecker J.R."/>
        </authorList>
    </citation>
    <scope>NUCLEOTIDE SEQUENCE [LARGE SCALE MRNA] (ISOFORM 2)</scope>
    <source>
        <strain>cv. Columbia</strain>
    </source>
</reference>
<reference key="4">
    <citation type="submission" date="2006-07" db="EMBL/GenBank/DDBJ databases">
        <title>Large-scale analysis of RIKEN Arabidopsis full-length (RAFL) cDNAs.</title>
        <authorList>
            <person name="Totoki Y."/>
            <person name="Seki M."/>
            <person name="Ishida J."/>
            <person name="Nakajima M."/>
            <person name="Enju A."/>
            <person name="Kamiya A."/>
            <person name="Narusaka M."/>
            <person name="Shin-i T."/>
            <person name="Nakagawa M."/>
            <person name="Sakamoto N."/>
            <person name="Oishi K."/>
            <person name="Kohara Y."/>
            <person name="Kobayashi M."/>
            <person name="Toyoda A."/>
            <person name="Sakaki Y."/>
            <person name="Sakurai T."/>
            <person name="Iida K."/>
            <person name="Akiyama K."/>
            <person name="Satou M."/>
            <person name="Toyoda T."/>
            <person name="Konagaya A."/>
            <person name="Carninci P."/>
            <person name="Kawai J."/>
            <person name="Hayashizaki Y."/>
            <person name="Shinozaki K."/>
        </authorList>
    </citation>
    <scope>NUCLEOTIDE SEQUENCE [LARGE SCALE MRNA] (ISOFORMS 1 AND 2)</scope>
    <source>
        <strain>cv. Columbia</strain>
    </source>
</reference>
<feature type="chain" id="PRO_0000045446" description="Isoaspartyl peptidase/L-asparaginase 3 subunit alpha">
    <location>
        <begin position="1"/>
        <end position="223"/>
    </location>
</feature>
<feature type="chain" id="PRO_0000045447" description="Isoaspartyl peptidase/L-asparaginase 3 subunit beta">
    <location>
        <begin position="224"/>
        <end position="359"/>
    </location>
</feature>
<feature type="active site" description="Nucleophile" evidence="1">
    <location>
        <position position="224"/>
    </location>
</feature>
<feature type="binding site" evidence="1">
    <location>
        <begin position="252"/>
        <end position="255"/>
    </location>
    <ligand>
        <name>substrate</name>
    </ligand>
</feature>
<feature type="binding site" evidence="1">
    <location>
        <begin position="275"/>
        <end position="278"/>
    </location>
    <ligand>
        <name>substrate</name>
    </ligand>
</feature>
<feature type="site" description="Cleavage; by autolysis" evidence="1">
    <location>
        <begin position="223"/>
        <end position="224"/>
    </location>
</feature>
<feature type="splice variant" id="VSP_016937" description="In isoform 2." evidence="2 3">
    <location>
        <begin position="1"/>
        <end position="102"/>
    </location>
</feature>
<gene>
    <name type="ordered locus">At5g61540</name>
    <name type="ORF">K11J9.7</name>
</gene>
<keyword id="KW-0025">Alternative splicing</keyword>
<keyword id="KW-0068">Autocatalytic cleavage</keyword>
<keyword id="KW-0378">Hydrolase</keyword>
<keyword id="KW-0645">Protease</keyword>
<keyword id="KW-1185">Reference proteome</keyword>
<protein>
    <recommendedName>
        <fullName>Probable isoaspartyl peptidase/L-asparaginase 3</fullName>
        <ecNumber>3.4.19.5</ecNumber>
    </recommendedName>
    <alternativeName>
        <fullName>L-asparagine amidohydrolase 3</fullName>
    </alternativeName>
    <component>
        <recommendedName>
            <fullName>Isoaspartyl peptidase/L-asparaginase 3 subunit alpha</fullName>
        </recommendedName>
    </component>
    <component>
        <recommendedName>
            <fullName>Isoaspartyl peptidase/L-asparaginase 3 subunit beta</fullName>
        </recommendedName>
    </component>
</protein>
<accession>Q56W64</accession>
<accession>Q27GI5</accession>
<accession>Q5M760</accession>
<accession>Q9FKG7</accession>
<dbReference type="EC" id="3.4.19.5"/>
<dbReference type="EMBL" id="AB012239">
    <property type="protein sequence ID" value="BAB08998.1"/>
    <property type="status" value="ALT_SEQ"/>
    <property type="molecule type" value="Genomic_DNA"/>
</dbReference>
<dbReference type="EMBL" id="CP002688">
    <property type="protein sequence ID" value="AED97483.1"/>
    <property type="molecule type" value="Genomic_DNA"/>
</dbReference>
<dbReference type="EMBL" id="CP002688">
    <property type="protein sequence ID" value="AED97484.1"/>
    <property type="molecule type" value="Genomic_DNA"/>
</dbReference>
<dbReference type="EMBL" id="CP002688">
    <property type="protein sequence ID" value="AED97485.1"/>
    <property type="molecule type" value="Genomic_DNA"/>
</dbReference>
<dbReference type="EMBL" id="BT020388">
    <property type="protein sequence ID" value="AAV91334.1"/>
    <property type="molecule type" value="mRNA"/>
</dbReference>
<dbReference type="EMBL" id="BT022060">
    <property type="protein sequence ID" value="AAY25472.1"/>
    <property type="molecule type" value="mRNA"/>
</dbReference>
<dbReference type="EMBL" id="AK222183">
    <property type="protein sequence ID" value="BAD95316.1"/>
    <property type="molecule type" value="mRNA"/>
</dbReference>
<dbReference type="EMBL" id="AK230301">
    <property type="protein sequence ID" value="BAF02102.1"/>
    <property type="molecule type" value="mRNA"/>
</dbReference>
<dbReference type="RefSeq" id="NP_001032119.1">
    <molecule id="Q56W64-2"/>
    <property type="nucleotide sequence ID" value="NM_001037042.1"/>
</dbReference>
<dbReference type="RefSeq" id="NP_200962.2">
    <molecule id="Q56W64-1"/>
    <property type="nucleotide sequence ID" value="NM_125547.4"/>
</dbReference>
<dbReference type="RefSeq" id="NP_974974.1">
    <molecule id="Q56W64-2"/>
    <property type="nucleotide sequence ID" value="NM_203245.2"/>
</dbReference>
<dbReference type="SMR" id="Q56W64"/>
<dbReference type="FunCoup" id="Q56W64">
    <property type="interactions" value="1154"/>
</dbReference>
<dbReference type="STRING" id="3702.Q56W64"/>
<dbReference type="MEROPS" id="T02.001"/>
<dbReference type="PaxDb" id="3702-AT5G61540.1"/>
<dbReference type="ProteomicsDB" id="246697">
    <molecule id="Q56W64-1"/>
</dbReference>
<dbReference type="EnsemblPlants" id="AT5G61540.1">
    <molecule id="Q56W64-1"/>
    <property type="protein sequence ID" value="AT5G61540.1"/>
    <property type="gene ID" value="AT5G61540"/>
</dbReference>
<dbReference type="EnsemblPlants" id="AT5G61540.2">
    <molecule id="Q56W64-2"/>
    <property type="protein sequence ID" value="AT5G61540.2"/>
    <property type="gene ID" value="AT5G61540"/>
</dbReference>
<dbReference type="EnsemblPlants" id="AT5G61540.3">
    <molecule id="Q56W64-2"/>
    <property type="protein sequence ID" value="AT5G61540.3"/>
    <property type="gene ID" value="AT5G61540"/>
</dbReference>
<dbReference type="GeneID" id="836275"/>
<dbReference type="Gramene" id="AT5G61540.1">
    <molecule id="Q56W64-1"/>
    <property type="protein sequence ID" value="AT5G61540.1"/>
    <property type="gene ID" value="AT5G61540"/>
</dbReference>
<dbReference type="Gramene" id="AT5G61540.2">
    <molecule id="Q56W64-2"/>
    <property type="protein sequence ID" value="AT5G61540.2"/>
    <property type="gene ID" value="AT5G61540"/>
</dbReference>
<dbReference type="Gramene" id="AT5G61540.3">
    <molecule id="Q56W64-2"/>
    <property type="protein sequence ID" value="AT5G61540.3"/>
    <property type="gene ID" value="AT5G61540"/>
</dbReference>
<dbReference type="KEGG" id="ath:AT5G61540"/>
<dbReference type="Araport" id="AT5G61540"/>
<dbReference type="TAIR" id="AT5G61540"/>
<dbReference type="eggNOG" id="KOG1593">
    <property type="taxonomic scope" value="Eukaryota"/>
</dbReference>
<dbReference type="InParanoid" id="Q56W64"/>
<dbReference type="OMA" id="YKPIINI"/>
<dbReference type="OrthoDB" id="2262349at2759"/>
<dbReference type="PhylomeDB" id="Q56W64"/>
<dbReference type="BioCyc" id="ARA:AT5G61540-MONOMER"/>
<dbReference type="PRO" id="PR:Q56W64"/>
<dbReference type="Proteomes" id="UP000006548">
    <property type="component" value="Chromosome 5"/>
</dbReference>
<dbReference type="ExpressionAtlas" id="Q56W64">
    <property type="expression patterns" value="baseline and differential"/>
</dbReference>
<dbReference type="GO" id="GO:0008798">
    <property type="term" value="F:beta-aspartyl-peptidase activity"/>
    <property type="evidence" value="ECO:0007669"/>
    <property type="project" value="UniProtKB-EC"/>
</dbReference>
<dbReference type="GO" id="GO:0016811">
    <property type="term" value="F:hydrolase activity, acting on carbon-nitrogen (but not peptide) bonds, in linear amides"/>
    <property type="evidence" value="ECO:0007669"/>
    <property type="project" value="UniProtKB-ARBA"/>
</dbReference>
<dbReference type="GO" id="GO:0006508">
    <property type="term" value="P:proteolysis"/>
    <property type="evidence" value="ECO:0007669"/>
    <property type="project" value="UniProtKB-KW"/>
</dbReference>
<dbReference type="CDD" id="cd04513">
    <property type="entry name" value="Glycosylasparaginase"/>
    <property type="match status" value="1"/>
</dbReference>
<dbReference type="FunFam" id="3.60.20.30:FF:000003">
    <property type="entry name" value="N(4)-(Beta-N-acetylglucosaminyl)-L-asparaginase isoform X1"/>
    <property type="match status" value="1"/>
</dbReference>
<dbReference type="Gene3D" id="3.60.20.30">
    <property type="entry name" value="(Glycosyl)asparaginase"/>
    <property type="match status" value="1"/>
</dbReference>
<dbReference type="InterPro" id="IPR029055">
    <property type="entry name" value="Ntn_hydrolases_N"/>
</dbReference>
<dbReference type="InterPro" id="IPR000246">
    <property type="entry name" value="Peptidase_T2"/>
</dbReference>
<dbReference type="PANTHER" id="PTHR10188">
    <property type="entry name" value="L-ASPARAGINASE"/>
    <property type="match status" value="1"/>
</dbReference>
<dbReference type="PANTHER" id="PTHR10188:SF6">
    <property type="entry name" value="N(4)-(BETA-N-ACETYLGLUCOSAMINYL)-L-ASPARAGINASE"/>
    <property type="match status" value="1"/>
</dbReference>
<dbReference type="Pfam" id="PF01112">
    <property type="entry name" value="Asparaginase_2"/>
    <property type="match status" value="1"/>
</dbReference>
<dbReference type="SUPFAM" id="SSF56235">
    <property type="entry name" value="N-terminal nucleophile aminohydrolases (Ntn hydrolases)"/>
    <property type="match status" value="1"/>
</dbReference>
<proteinExistence type="evidence at transcript level"/>
<name>ASPG3_ARATH</name>
<comment type="function">
    <text evidence="1">Acts in asparagine catabolism but also in the final steps of protein degradation via hydrolysis of a range of isoaspartyl dipeptides.</text>
</comment>
<comment type="catalytic activity">
    <reaction>
        <text>Cleavage of a beta-linked Asp residue from the N-terminus of a polypeptide.</text>
        <dbReference type="EC" id="3.4.19.5"/>
    </reaction>
</comment>
<comment type="subunit">
    <text evidence="1">Heterotetramer of two alpha and two beta chains arranged as a dimer of alpha/beta heterodimers.</text>
</comment>
<comment type="alternative products">
    <event type="alternative splicing"/>
    <isoform>
        <id>Q56W64-1</id>
        <name>1</name>
        <sequence type="displayed"/>
    </isoform>
    <isoform>
        <id>Q56W64-2</id>
        <name>2</name>
        <sequence type="described" ref="VSP_016937"/>
    </isoform>
</comment>
<comment type="PTM">
    <text evidence="1">Cleaved into an alpha and beta chain by autocatalysis; this activates the enzyme. The N-terminal residue of the beta subunit is responsible for the nucleophile hydrolase activity (By similarity).</text>
</comment>
<comment type="miscellaneous">
    <molecule>Isoform 2</molecule>
    <text evidence="4">May be due to intron retention or to a competing acceptor splice site.</text>
</comment>
<comment type="similarity">
    <text evidence="4">Belongs to the Ntn-hydrolase family.</text>
</comment>
<comment type="sequence caution" evidence="4">
    <conflict type="erroneous gene model prediction">
        <sequence resource="EMBL-CDS" id="BAB08998"/>
    </conflict>
</comment>
<organism>
    <name type="scientific">Arabidopsis thaliana</name>
    <name type="common">Mouse-ear cress</name>
    <dbReference type="NCBI Taxonomy" id="3702"/>
    <lineage>
        <taxon>Eukaryota</taxon>
        <taxon>Viridiplantae</taxon>
        <taxon>Streptophyta</taxon>
        <taxon>Embryophyta</taxon>
        <taxon>Tracheophyta</taxon>
        <taxon>Spermatophyta</taxon>
        <taxon>Magnoliopsida</taxon>
        <taxon>eudicotyledons</taxon>
        <taxon>Gunneridae</taxon>
        <taxon>Pentapetalae</taxon>
        <taxon>rosids</taxon>
        <taxon>malvids</taxon>
        <taxon>Brassicales</taxon>
        <taxon>Brassicaceae</taxon>
        <taxon>Camelineae</taxon>
        <taxon>Arabidopsis</taxon>
    </lineage>
</organism>